<proteinExistence type="inferred from homology"/>
<name>SECE_HALLT</name>
<dbReference type="EMBL" id="CP001365">
    <property type="protein sequence ID" value="ACM56498.1"/>
    <property type="molecule type" value="Genomic_DNA"/>
</dbReference>
<dbReference type="RefSeq" id="WP_006628863.1">
    <property type="nucleotide sequence ID" value="NC_012029.1"/>
</dbReference>
<dbReference type="SMR" id="B9LV21"/>
<dbReference type="GeneID" id="7401271"/>
<dbReference type="KEGG" id="hla:Hlac_0900"/>
<dbReference type="eggNOG" id="arCOG02204">
    <property type="taxonomic scope" value="Archaea"/>
</dbReference>
<dbReference type="HOGENOM" id="CLU_191921_2_0_2"/>
<dbReference type="Proteomes" id="UP000000740">
    <property type="component" value="Chromosome 1"/>
</dbReference>
<dbReference type="GO" id="GO:0005886">
    <property type="term" value="C:plasma membrane"/>
    <property type="evidence" value="ECO:0007669"/>
    <property type="project" value="UniProtKB-SubCell"/>
</dbReference>
<dbReference type="GO" id="GO:0008320">
    <property type="term" value="F:protein transmembrane transporter activity"/>
    <property type="evidence" value="ECO:0007669"/>
    <property type="project" value="UniProtKB-UniRule"/>
</dbReference>
<dbReference type="GO" id="GO:0065002">
    <property type="term" value="P:intracellular protein transmembrane transport"/>
    <property type="evidence" value="ECO:0007669"/>
    <property type="project" value="UniProtKB-UniRule"/>
</dbReference>
<dbReference type="GO" id="GO:0009306">
    <property type="term" value="P:protein secretion"/>
    <property type="evidence" value="ECO:0007669"/>
    <property type="project" value="UniProtKB-UniRule"/>
</dbReference>
<dbReference type="GO" id="GO:0006605">
    <property type="term" value="P:protein targeting"/>
    <property type="evidence" value="ECO:0007669"/>
    <property type="project" value="UniProtKB-UniRule"/>
</dbReference>
<dbReference type="Gene3D" id="1.20.5.820">
    <property type="entry name" value="Preprotein translocase SecE subunit"/>
    <property type="match status" value="1"/>
</dbReference>
<dbReference type="HAMAP" id="MF_00422">
    <property type="entry name" value="SecE"/>
    <property type="match status" value="1"/>
</dbReference>
<dbReference type="InterPro" id="IPR023391">
    <property type="entry name" value="Prot_translocase_SecE_dom_sf"/>
</dbReference>
<dbReference type="InterPro" id="IPR008158">
    <property type="entry name" value="Translocase_Sec61-g"/>
</dbReference>
<dbReference type="InterPro" id="IPR001901">
    <property type="entry name" value="Translocase_SecE/Sec61-g"/>
</dbReference>
<dbReference type="NCBIfam" id="NF006910">
    <property type="entry name" value="PRK09400.1-6"/>
    <property type="match status" value="1"/>
</dbReference>
<dbReference type="NCBIfam" id="TIGR00327">
    <property type="entry name" value="secE_euk_arch"/>
    <property type="match status" value="1"/>
</dbReference>
<dbReference type="SUPFAM" id="SSF103456">
    <property type="entry name" value="Preprotein translocase SecE subunit"/>
    <property type="match status" value="1"/>
</dbReference>
<evidence type="ECO:0000255" key="1">
    <source>
        <dbReference type="HAMAP-Rule" id="MF_00422"/>
    </source>
</evidence>
<comment type="function">
    <text evidence="1">Essential subunit of the Sec protein translocation channel SecYEG. Clamps together the 2 halves of SecY. May contact the channel plug during translocation.</text>
</comment>
<comment type="subunit">
    <text evidence="1">Component of the Sec protein translocase complex. Heterotrimer consisting of SecY (alpha), SecG (beta) and SecE (gamma) subunits. The heterotrimers can form oligomers, although 1 heterotrimer is thought to be able to translocate proteins. Interacts with the ribosome. May interact with SecDF, and other proteins may be involved.</text>
</comment>
<comment type="subcellular location">
    <subcellularLocation>
        <location evidence="1">Cell membrane</location>
        <topology evidence="1">Single-pass membrane protein</topology>
    </subcellularLocation>
</comment>
<comment type="similarity">
    <text evidence="1">Belongs to the SecE/SEC61-gamma family.</text>
</comment>
<feature type="chain" id="PRO_1000134917" description="Protein translocase subunit SecE">
    <location>
        <begin position="1"/>
        <end position="58"/>
    </location>
</feature>
<feature type="transmembrane region" description="Helical" evidence="1">
    <location>
        <begin position="36"/>
        <end position="56"/>
    </location>
</feature>
<gene>
    <name evidence="1" type="primary">secE</name>
    <name type="ordered locus">Hlac_0900</name>
</gene>
<sequence>MDVPYDLNSYIRVLKLASTPSTDEFLQVSKIAGAGILLIGFIGFLMFAIMSLLPGVGA</sequence>
<protein>
    <recommendedName>
        <fullName evidence="1">Protein translocase subunit SecE</fullName>
    </recommendedName>
    <alternativeName>
        <fullName evidence="1">Protein transport protein Sec61 gamma subunit homolog</fullName>
    </alternativeName>
</protein>
<organism>
    <name type="scientific">Halorubrum lacusprofundi (strain ATCC 49239 / DSM 5036 / JCM 8891 / ACAM 34)</name>
    <dbReference type="NCBI Taxonomy" id="416348"/>
    <lineage>
        <taxon>Archaea</taxon>
        <taxon>Methanobacteriati</taxon>
        <taxon>Methanobacteriota</taxon>
        <taxon>Stenosarchaea group</taxon>
        <taxon>Halobacteria</taxon>
        <taxon>Halobacteriales</taxon>
        <taxon>Haloferacaceae</taxon>
        <taxon>Halorubrum</taxon>
    </lineage>
</organism>
<reference key="1">
    <citation type="journal article" date="2016" name="Stand. Genomic Sci.">
        <title>Complete genome sequence of the Antarctic Halorubrum lacusprofundi type strain ACAM 34.</title>
        <authorList>
            <person name="Anderson I.J."/>
            <person name="DasSarma P."/>
            <person name="Lucas S."/>
            <person name="Copeland A."/>
            <person name="Lapidus A."/>
            <person name="Del Rio T.G."/>
            <person name="Tice H."/>
            <person name="Dalin E."/>
            <person name="Bruce D.C."/>
            <person name="Goodwin L."/>
            <person name="Pitluck S."/>
            <person name="Sims D."/>
            <person name="Brettin T.S."/>
            <person name="Detter J.C."/>
            <person name="Han C.S."/>
            <person name="Larimer F."/>
            <person name="Hauser L."/>
            <person name="Land M."/>
            <person name="Ivanova N."/>
            <person name="Richardson P."/>
            <person name="Cavicchioli R."/>
            <person name="DasSarma S."/>
            <person name="Woese C.R."/>
            <person name="Kyrpides N.C."/>
        </authorList>
    </citation>
    <scope>NUCLEOTIDE SEQUENCE [LARGE SCALE GENOMIC DNA]</scope>
    <source>
        <strain>ATCC 49239 / DSM 5036 / JCM 8891 / ACAM 34</strain>
    </source>
</reference>
<accession>B9LV21</accession>
<keyword id="KW-1003">Cell membrane</keyword>
<keyword id="KW-0472">Membrane</keyword>
<keyword id="KW-0653">Protein transport</keyword>
<keyword id="KW-1185">Reference proteome</keyword>
<keyword id="KW-0811">Translocation</keyword>
<keyword id="KW-0812">Transmembrane</keyword>
<keyword id="KW-1133">Transmembrane helix</keyword>
<keyword id="KW-0813">Transport</keyword>